<name>CUB2_PLARH</name>
<comment type="subcellular location">
    <subcellularLocation>
        <location evidence="3">Secreted</location>
    </subcellularLocation>
</comment>
<comment type="tissue specificity">
    <text evidence="3">Expressed by the venom gland (posterior main gland) (at protein level).</text>
</comment>
<comment type="similarity">
    <text evidence="5">Belongs to the venom CUB family.</text>
</comment>
<dbReference type="EMBL" id="MN208307">
    <property type="protein sequence ID" value="QHB21496.1"/>
    <property type="molecule type" value="mRNA"/>
</dbReference>
<dbReference type="SMR" id="A0A6B9KZ30"/>
<dbReference type="GO" id="GO:0005576">
    <property type="term" value="C:extracellular region"/>
    <property type="evidence" value="ECO:0007669"/>
    <property type="project" value="UniProtKB-SubCell"/>
</dbReference>
<dbReference type="Gene3D" id="2.60.120.290">
    <property type="entry name" value="Spermadhesin, CUB domain"/>
    <property type="match status" value="1"/>
</dbReference>
<dbReference type="InterPro" id="IPR000859">
    <property type="entry name" value="CUB_dom"/>
</dbReference>
<dbReference type="InterPro" id="IPR035914">
    <property type="entry name" value="Sperma_CUB_dom_sf"/>
</dbReference>
<dbReference type="Pfam" id="PF00431">
    <property type="entry name" value="CUB"/>
    <property type="match status" value="1"/>
</dbReference>
<dbReference type="SMART" id="SM00042">
    <property type="entry name" value="CUB"/>
    <property type="match status" value="1"/>
</dbReference>
<dbReference type="SUPFAM" id="SSF49854">
    <property type="entry name" value="Spermadhesin, CUB domain"/>
    <property type="match status" value="1"/>
</dbReference>
<organism>
    <name type="scientific">Platymeris rhadamanthus</name>
    <name type="common">Red spot assassin bug</name>
    <dbReference type="NCBI Taxonomy" id="1134088"/>
    <lineage>
        <taxon>Eukaryota</taxon>
        <taxon>Metazoa</taxon>
        <taxon>Ecdysozoa</taxon>
        <taxon>Arthropoda</taxon>
        <taxon>Hexapoda</taxon>
        <taxon>Insecta</taxon>
        <taxon>Pterygota</taxon>
        <taxon>Neoptera</taxon>
        <taxon>Paraneoptera</taxon>
        <taxon>Hemiptera</taxon>
        <taxon>Heteroptera</taxon>
        <taxon>Panheteroptera</taxon>
        <taxon>Cimicomorpha</taxon>
        <taxon>Reduviidae</taxon>
        <taxon>Platymeris</taxon>
    </lineage>
</organism>
<evidence type="ECO:0000255" key="1"/>
<evidence type="ECO:0000255" key="2">
    <source>
        <dbReference type="PROSITE-ProRule" id="PRU00059"/>
    </source>
</evidence>
<evidence type="ECO:0000269" key="3">
    <source>
    </source>
</evidence>
<evidence type="ECO:0000303" key="4">
    <source>
    </source>
</evidence>
<evidence type="ECO:0000305" key="5"/>
<proteinExistence type="evidence at protein level"/>
<keyword id="KW-1015">Disulfide bond</keyword>
<keyword id="KW-0964">Secreted</keyword>
<keyword id="KW-0732">Signal</keyword>
<sequence>MKTLFLAIALFSAVALAEEKSESAELVPGGEAFVVESVNYPEDASANLKQTWKLTTTAGNFIHLECTDIRLFEDKPCGDWALTFDDGGNVTEMCTTSFDHKFTSKTNTLTLTLRTGRDARGFVACKATATKK</sequence>
<feature type="signal peptide" evidence="1">
    <location>
        <begin position="1"/>
        <end position="17"/>
    </location>
</feature>
<feature type="chain" id="PRO_5025379123" description="Venom CUB domain-containing protein 2" evidence="5">
    <location>
        <begin position="18"/>
        <end position="132"/>
    </location>
</feature>
<feature type="domain" description="CUB" evidence="2">
    <location>
        <begin position="22"/>
        <end position="129"/>
    </location>
</feature>
<feature type="disulfide bond" evidence="5">
    <location>
        <begin position="66"/>
        <end position="125"/>
    </location>
</feature>
<feature type="disulfide bond" evidence="2">
    <location>
        <begin position="77"/>
        <end position="94"/>
    </location>
</feature>
<protein>
    <recommendedName>
        <fullName evidence="4">Venom CUB domain-containing protein 2</fullName>
    </recommendedName>
</protein>
<accession>A0A6B9KZ30</accession>
<reference key="1">
    <citation type="journal article" date="2019" name="Toxins">
        <title>Missiles of mass disruption: composition and glandular origin of venom used as a projectile defensive weapon by the assassin bug Platymeris rhadamanthus.</title>
        <authorList>
            <person name="Walker A.A."/>
            <person name="Robinson S.D."/>
            <person name="Undheim E.A.B."/>
            <person name="Jin J."/>
            <person name="Han X."/>
            <person name="Fry B.G."/>
            <person name="Vetter I."/>
            <person name="King G.F."/>
        </authorList>
    </citation>
    <scope>NUCLEOTIDE SEQUENCE [MRNA]</scope>
    <scope>IDENTIFICATION BY MASS SPECTROMETRY</scope>
    <scope>SUBCELLULAR LOCATION</scope>
    <scope>TISSUE SPECIFICITY</scope>
    <source>
        <tissue>Venom</tissue>
        <tissue>Venom gland</tissue>
    </source>
</reference>